<feature type="chain" id="PRO_0000302813" description="Protein LTV1 homolog">
    <location>
        <begin position="1"/>
        <end position="475"/>
    </location>
</feature>
<feature type="region of interest" description="Disordered" evidence="4">
    <location>
        <begin position="23"/>
        <end position="54"/>
    </location>
</feature>
<feature type="region of interest" description="Disordered" evidence="4">
    <location>
        <begin position="74"/>
        <end position="99"/>
    </location>
</feature>
<feature type="region of interest" description="Disordered" evidence="4">
    <location>
        <begin position="169"/>
        <end position="213"/>
    </location>
</feature>
<feature type="region of interest" description="Disordered" evidence="4">
    <location>
        <begin position="405"/>
        <end position="447"/>
    </location>
</feature>
<feature type="coiled-coil region" evidence="3">
    <location>
        <begin position="418"/>
        <end position="475"/>
    </location>
</feature>
<feature type="compositionally biased region" description="Acidic residues" evidence="4">
    <location>
        <begin position="184"/>
        <end position="213"/>
    </location>
</feature>
<feature type="compositionally biased region" description="Basic and acidic residues" evidence="4">
    <location>
        <begin position="419"/>
        <end position="447"/>
    </location>
</feature>
<feature type="modified residue" description="Phosphoserine" evidence="8">
    <location>
        <position position="17"/>
    </location>
</feature>
<feature type="modified residue" description="Phosphoserine" evidence="8">
    <location>
        <position position="24"/>
    </location>
</feature>
<feature type="modified residue" description="Phosphoserine" evidence="2">
    <location>
        <position position="248"/>
    </location>
</feature>
<feature type="modified residue" description="Phosphoserine" evidence="7">
    <location>
        <position position="331"/>
    </location>
</feature>
<feature type="modified residue" description="Phosphoserine" evidence="8">
    <location>
        <position position="408"/>
    </location>
</feature>
<feature type="sequence variant" id="VAR_088086" description="In IPHAK; uncertain significance; due to a nucleotide substitution that creates a novel donor splice site resulting in aberrant splicing; small amounts of canonically spliced transcripts with the missense variant are also produced; decreased protein abundance in patient cells; dbSNP:rs932818172." evidence="5">
    <original>N</original>
    <variation>S</variation>
    <location>
        <position position="168"/>
    </location>
</feature>
<feature type="helix" evidence="9">
    <location>
        <begin position="264"/>
        <end position="267"/>
    </location>
</feature>
<feature type="helix" evidence="9">
    <location>
        <begin position="292"/>
        <end position="301"/>
    </location>
</feature>
<feature type="strand" evidence="11">
    <location>
        <begin position="307"/>
        <end position="309"/>
    </location>
</feature>
<feature type="helix" evidence="9">
    <location>
        <begin position="352"/>
        <end position="356"/>
    </location>
</feature>
<feature type="strand" evidence="9">
    <location>
        <begin position="359"/>
        <end position="362"/>
    </location>
</feature>
<feature type="strand" evidence="9">
    <location>
        <begin position="365"/>
        <end position="367"/>
    </location>
</feature>
<feature type="turn" evidence="10">
    <location>
        <begin position="424"/>
        <end position="426"/>
    </location>
</feature>
<feature type="helix" evidence="10">
    <location>
        <begin position="427"/>
        <end position="468"/>
    </location>
</feature>
<protein>
    <recommendedName>
        <fullName>Protein LTV1 homolog</fullName>
    </recommendedName>
</protein>
<organism>
    <name type="scientific">Homo sapiens</name>
    <name type="common">Human</name>
    <dbReference type="NCBI Taxonomy" id="9606"/>
    <lineage>
        <taxon>Eukaryota</taxon>
        <taxon>Metazoa</taxon>
        <taxon>Chordata</taxon>
        <taxon>Craniata</taxon>
        <taxon>Vertebrata</taxon>
        <taxon>Euteleostomi</taxon>
        <taxon>Mammalia</taxon>
        <taxon>Eutheria</taxon>
        <taxon>Euarchontoglires</taxon>
        <taxon>Primates</taxon>
        <taxon>Haplorrhini</taxon>
        <taxon>Catarrhini</taxon>
        <taxon>Hominidae</taxon>
        <taxon>Homo</taxon>
    </lineage>
</organism>
<dbReference type="EMBL" id="AL049844">
    <property type="status" value="NOT_ANNOTATED_CDS"/>
    <property type="molecule type" value="Genomic_DNA"/>
</dbReference>
<dbReference type="EMBL" id="CH471051">
    <property type="protein sequence ID" value="EAW47859.1"/>
    <property type="molecule type" value="Genomic_DNA"/>
</dbReference>
<dbReference type="EMBL" id="BC009855">
    <property type="protein sequence ID" value="AAH09855.1"/>
    <property type="molecule type" value="mRNA"/>
</dbReference>
<dbReference type="EMBL" id="AK027815">
    <property type="protein sequence ID" value="BAB55388.1"/>
    <property type="status" value="ALT_INIT"/>
    <property type="molecule type" value="mRNA"/>
</dbReference>
<dbReference type="CCDS" id="CCDS5201.1"/>
<dbReference type="RefSeq" id="NP_116249.2">
    <property type="nucleotide sequence ID" value="NM_032860.4"/>
</dbReference>
<dbReference type="PDB" id="6G18">
    <property type="method" value="EM"/>
    <property type="resolution" value="3.60 A"/>
    <property type="chains" value="t=1-475"/>
</dbReference>
<dbReference type="PDB" id="6G4S">
    <property type="method" value="EM"/>
    <property type="resolution" value="4.00 A"/>
    <property type="chains" value="t=1-475"/>
</dbReference>
<dbReference type="PDB" id="6G4W">
    <property type="method" value="EM"/>
    <property type="resolution" value="4.50 A"/>
    <property type="chains" value="t=352-369"/>
</dbReference>
<dbReference type="PDB" id="6G51">
    <property type="method" value="EM"/>
    <property type="resolution" value="4.10 A"/>
    <property type="chains" value="t=1-475"/>
</dbReference>
<dbReference type="PDB" id="6G53">
    <property type="method" value="EM"/>
    <property type="resolution" value="4.50 A"/>
    <property type="chains" value="t=1-475"/>
</dbReference>
<dbReference type="PDB" id="7WTT">
    <property type="method" value="EM"/>
    <property type="resolution" value="3.10 A"/>
    <property type="chains" value="t=1-475"/>
</dbReference>
<dbReference type="PDB" id="7WTU">
    <property type="method" value="EM"/>
    <property type="resolution" value="3.00 A"/>
    <property type="chains" value="t=1-475"/>
</dbReference>
<dbReference type="PDB" id="7WTW">
    <property type="method" value="EM"/>
    <property type="resolution" value="3.20 A"/>
    <property type="chains" value="t=1-475"/>
</dbReference>
<dbReference type="PDB" id="7WTX">
    <property type="method" value="EM"/>
    <property type="resolution" value="3.10 A"/>
    <property type="chains" value="t=1-475"/>
</dbReference>
<dbReference type="PDB" id="7WTZ">
    <property type="method" value="EM"/>
    <property type="resolution" value="3.00 A"/>
    <property type="chains" value="t=1-475"/>
</dbReference>
<dbReference type="PDB" id="7WU0">
    <property type="method" value="EM"/>
    <property type="resolution" value="3.30 A"/>
    <property type="chains" value="t=1-475"/>
</dbReference>
<dbReference type="PDB" id="8ZDC">
    <property type="method" value="EM"/>
    <property type="resolution" value="3.80 A"/>
    <property type="chains" value="t=1-475"/>
</dbReference>
<dbReference type="PDB" id="8ZDD">
    <property type="method" value="EM"/>
    <property type="resolution" value="3.70 A"/>
    <property type="chains" value="t=1-475"/>
</dbReference>
<dbReference type="PDBsum" id="6G18"/>
<dbReference type="PDBsum" id="6G4S"/>
<dbReference type="PDBsum" id="6G4W"/>
<dbReference type="PDBsum" id="6G51"/>
<dbReference type="PDBsum" id="6G53"/>
<dbReference type="PDBsum" id="7WTT"/>
<dbReference type="PDBsum" id="7WTU"/>
<dbReference type="PDBsum" id="7WTW"/>
<dbReference type="PDBsum" id="7WTX"/>
<dbReference type="PDBsum" id="7WTZ"/>
<dbReference type="PDBsum" id="7WU0"/>
<dbReference type="PDBsum" id="8ZDC"/>
<dbReference type="PDBsum" id="8ZDD"/>
<dbReference type="EMDB" id="EMD-32800"/>
<dbReference type="EMDB" id="EMD-32801"/>
<dbReference type="EMDB" id="EMD-32803"/>
<dbReference type="EMDB" id="EMD-32804"/>
<dbReference type="EMDB" id="EMD-32806"/>
<dbReference type="EMDB" id="EMD-32807"/>
<dbReference type="EMDB" id="EMD-39957"/>
<dbReference type="EMDB" id="EMD-39958"/>
<dbReference type="EMDB" id="EMD-4337"/>
<dbReference type="EMDB" id="EMD-4348"/>
<dbReference type="EMDB" id="EMD-4350"/>
<dbReference type="EMDB" id="EMD-4351"/>
<dbReference type="SMR" id="Q96GA3"/>
<dbReference type="BioGRID" id="124379">
    <property type="interactions" value="272"/>
</dbReference>
<dbReference type="FunCoup" id="Q96GA3">
    <property type="interactions" value="3090"/>
</dbReference>
<dbReference type="IntAct" id="Q96GA3">
    <property type="interactions" value="116"/>
</dbReference>
<dbReference type="MINT" id="Q96GA3"/>
<dbReference type="STRING" id="9606.ENSP00000356548"/>
<dbReference type="GlyGen" id="Q96GA3">
    <property type="glycosylation" value="1 site, 1 O-linked glycan (1 site)"/>
</dbReference>
<dbReference type="iPTMnet" id="Q96GA3"/>
<dbReference type="PhosphoSitePlus" id="Q96GA3"/>
<dbReference type="BioMuta" id="LTV1"/>
<dbReference type="DMDM" id="74751878"/>
<dbReference type="jPOST" id="Q96GA3"/>
<dbReference type="MassIVE" id="Q96GA3"/>
<dbReference type="PaxDb" id="9606-ENSP00000356548"/>
<dbReference type="PeptideAtlas" id="Q96GA3"/>
<dbReference type="ProteomicsDB" id="76608"/>
<dbReference type="Pumba" id="Q96GA3"/>
<dbReference type="Antibodypedia" id="33167">
    <property type="antibodies" value="68 antibodies from 14 providers"/>
</dbReference>
<dbReference type="DNASU" id="84946"/>
<dbReference type="Ensembl" id="ENST00000367576.6">
    <property type="protein sequence ID" value="ENSP00000356548.5"/>
    <property type="gene ID" value="ENSG00000135521.9"/>
</dbReference>
<dbReference type="GeneID" id="84946"/>
<dbReference type="KEGG" id="hsa:84946"/>
<dbReference type="MANE-Select" id="ENST00000367576.6">
    <property type="protein sequence ID" value="ENSP00000356548.5"/>
    <property type="RefSeq nucleotide sequence ID" value="NM_032860.5"/>
    <property type="RefSeq protein sequence ID" value="NP_116249.2"/>
</dbReference>
<dbReference type="UCSC" id="uc003qjs.4">
    <property type="organism name" value="human"/>
</dbReference>
<dbReference type="AGR" id="HGNC:21173"/>
<dbReference type="CTD" id="84946"/>
<dbReference type="DisGeNET" id="84946"/>
<dbReference type="GeneCards" id="LTV1"/>
<dbReference type="HGNC" id="HGNC:21173">
    <property type="gene designation" value="LTV1"/>
</dbReference>
<dbReference type="HPA" id="ENSG00000135521">
    <property type="expression patterns" value="Low tissue specificity"/>
</dbReference>
<dbReference type="MalaCards" id="LTV1"/>
<dbReference type="MIM" id="620074">
    <property type="type" value="gene"/>
</dbReference>
<dbReference type="MIM" id="620199">
    <property type="type" value="phenotype"/>
</dbReference>
<dbReference type="neXtProt" id="NX_Q96GA3"/>
<dbReference type="OpenTargets" id="ENSG00000135521"/>
<dbReference type="PharmGKB" id="PA134893631"/>
<dbReference type="VEuPathDB" id="HostDB:ENSG00000135521"/>
<dbReference type="eggNOG" id="KOG2637">
    <property type="taxonomic scope" value="Eukaryota"/>
</dbReference>
<dbReference type="GeneTree" id="ENSGT00390000002789"/>
<dbReference type="HOGENOM" id="CLU_035718_0_0_1"/>
<dbReference type="InParanoid" id="Q96GA3"/>
<dbReference type="OMA" id="TKEFLFM"/>
<dbReference type="OrthoDB" id="5852896at2759"/>
<dbReference type="PAN-GO" id="Q96GA3">
    <property type="GO annotations" value="5 GO annotations based on evolutionary models"/>
</dbReference>
<dbReference type="PhylomeDB" id="Q96GA3"/>
<dbReference type="TreeFam" id="TF314845"/>
<dbReference type="PathwayCommons" id="Q96GA3"/>
<dbReference type="Reactome" id="R-HSA-6791226">
    <property type="pathway name" value="Major pathway of rRNA processing in the nucleolus and cytosol"/>
</dbReference>
<dbReference type="SignaLink" id="Q96GA3"/>
<dbReference type="BioGRID-ORCS" id="84946">
    <property type="hits" value="738 hits in 1160 CRISPR screens"/>
</dbReference>
<dbReference type="CD-CODE" id="232F8A39">
    <property type="entry name" value="P-body"/>
</dbReference>
<dbReference type="ChiTaRS" id="LTV1">
    <property type="organism name" value="human"/>
</dbReference>
<dbReference type="GenomeRNAi" id="84946"/>
<dbReference type="Pharos" id="Q96GA3">
    <property type="development level" value="Tbio"/>
</dbReference>
<dbReference type="PRO" id="PR:Q96GA3"/>
<dbReference type="Proteomes" id="UP000005640">
    <property type="component" value="Chromosome 6"/>
</dbReference>
<dbReference type="RNAct" id="Q96GA3">
    <property type="molecule type" value="protein"/>
</dbReference>
<dbReference type="Bgee" id="ENSG00000135521">
    <property type="expression patterns" value="Expressed in epithelial cell of pancreas and 185 other cell types or tissues"/>
</dbReference>
<dbReference type="GO" id="GO:0005829">
    <property type="term" value="C:cytosol"/>
    <property type="evidence" value="ECO:0000314"/>
    <property type="project" value="HPA"/>
</dbReference>
<dbReference type="GO" id="GO:0005654">
    <property type="term" value="C:nucleoplasm"/>
    <property type="evidence" value="ECO:0000314"/>
    <property type="project" value="HPA"/>
</dbReference>
<dbReference type="GO" id="GO:0005634">
    <property type="term" value="C:nucleus"/>
    <property type="evidence" value="ECO:0000318"/>
    <property type="project" value="GO_Central"/>
</dbReference>
<dbReference type="GO" id="GO:0030688">
    <property type="term" value="C:preribosome, small subunit precursor"/>
    <property type="evidence" value="ECO:0000318"/>
    <property type="project" value="GO_Central"/>
</dbReference>
<dbReference type="GO" id="GO:0042274">
    <property type="term" value="P:ribosomal small subunit biogenesis"/>
    <property type="evidence" value="ECO:0000318"/>
    <property type="project" value="GO_Central"/>
</dbReference>
<dbReference type="GO" id="GO:0000056">
    <property type="term" value="P:ribosomal small subunit export from nucleus"/>
    <property type="evidence" value="ECO:0000318"/>
    <property type="project" value="GO_Central"/>
</dbReference>
<dbReference type="GO" id="GO:0042254">
    <property type="term" value="P:ribosome biogenesis"/>
    <property type="evidence" value="ECO:0000250"/>
    <property type="project" value="UniProtKB"/>
</dbReference>
<dbReference type="InterPro" id="IPR007307">
    <property type="entry name" value="Ltv1"/>
</dbReference>
<dbReference type="PANTHER" id="PTHR21531">
    <property type="entry name" value="LOW-TEMPERATURE VIABILITY PROTEIN LTV1-RELATED"/>
    <property type="match status" value="1"/>
</dbReference>
<dbReference type="PANTHER" id="PTHR21531:SF0">
    <property type="entry name" value="PROTEIN LTV1 HOMOLOG"/>
    <property type="match status" value="1"/>
</dbReference>
<dbReference type="Pfam" id="PF04180">
    <property type="entry name" value="LTV"/>
    <property type="match status" value="2"/>
</dbReference>
<gene>
    <name type="primary">LTV1</name>
    <name type="synonym">C6orf93</name>
</gene>
<name>LTV1_HUMAN</name>
<evidence type="ECO:0000250" key="1">
    <source>
        <dbReference type="UniProtKB" id="Q5U3J8"/>
    </source>
</evidence>
<evidence type="ECO:0000250" key="2">
    <source>
        <dbReference type="UniProtKB" id="Q6NSQ7"/>
    </source>
</evidence>
<evidence type="ECO:0000255" key="3"/>
<evidence type="ECO:0000256" key="4">
    <source>
        <dbReference type="SAM" id="MobiDB-lite"/>
    </source>
</evidence>
<evidence type="ECO:0000269" key="5">
    <source>
    </source>
</evidence>
<evidence type="ECO:0000305" key="6"/>
<evidence type="ECO:0007744" key="7">
    <source>
    </source>
</evidence>
<evidence type="ECO:0007744" key="8">
    <source>
    </source>
</evidence>
<evidence type="ECO:0007829" key="9">
    <source>
        <dbReference type="PDB" id="7WTU"/>
    </source>
</evidence>
<evidence type="ECO:0007829" key="10">
    <source>
        <dbReference type="PDB" id="7WTZ"/>
    </source>
</evidence>
<evidence type="ECO:0007829" key="11">
    <source>
        <dbReference type="PDB" id="7WU0"/>
    </source>
</evidence>
<sequence>MPHRKKKPFIEKKKAVSFHLVHRSQRDPLAADESAPQRVLLPTQKIDNEERRAEQRKYGVFFDDDYDYLQHLKEPSGPSELIPSSTFSAHNRREEKEETLVIPSTGIKLPSSVFASEFEEDVGLLNKAAPVSGPRLDFDPDIVAALDDDFDFDDPDNLLEDDFILQANKATGEEEGMDIQKSENEDDSEWEDVDDEKGDSNDDYDSAGLLSDEDCMSVPGKTHRAIADHLFWSEETKSRFTEYSMTSSVMRRNEQLTLHDERFEKFYEQYDDDEIGALDNAELEGSIQVDSNRLQEVLNDYYKEKAENCVKLNTLEPLEDQDLPMNELDESEEEEMITVVLEEAKEKWDCESICSTYSNLYNHPQLIKYQPKPKQIRISSKTGIPLNVLPKKGLTAKQTERIQMINGSDLPKVSTQPRSKNESKEDKRARKQAIKEERKERRVEKKANKLAFKLEKRRQEKELLNLKKNVEGLKL</sequence>
<accession>Q96GA3</accession>
<accession>Q96JX8</accession>
<comment type="function">
    <text evidence="1">Essential for ribosome biogenesis.</text>
</comment>
<comment type="interaction">
    <interactant intactId="EBI-2558389">
        <id>Q96GA3</id>
    </interactant>
    <interactant intactId="EBI-358049">
        <id>Q13895</id>
        <label>BYSL</label>
    </interactant>
    <organismsDiffer>false</organismsDiffer>
    <experiments>15</experiments>
</comment>
<comment type="interaction">
    <interactant intactId="EBI-2558389">
        <id>Q96GA3</id>
    </interactant>
    <interactant intactId="EBI-347804">
        <id>P68400</id>
        <label>CSNK2A1</label>
    </interactant>
    <organismsDiffer>false</organismsDiffer>
    <experiments>2</experiments>
</comment>
<comment type="interaction">
    <interactant intactId="EBI-2558389">
        <id>Q96GA3</id>
    </interactant>
    <interactant intactId="EBI-7960826">
        <id>Q8NHY3</id>
        <label>GAS2L2</label>
    </interactant>
    <organismsDiffer>false</organismsDiffer>
    <experiments>3</experiments>
</comment>
<comment type="interaction">
    <interactant intactId="EBI-2558389">
        <id>Q96GA3</id>
    </interactant>
    <interactant intactId="EBI-351193">
        <id>P23396</id>
        <label>RPS3</label>
    </interactant>
    <organismsDiffer>false</organismsDiffer>
    <experiments>5</experiments>
</comment>
<comment type="subcellular location">
    <subcellularLocation>
        <location evidence="5">Cytoplasm</location>
    </subcellularLocation>
    <text evidence="5">The protein is expressed in a diffuse cytoplasmic pattern with granular perinuclear accentuation within the basal keratinocytes.</text>
</comment>
<comment type="tissue specificity">
    <text evidence="5">Expressed in the epidermis.</text>
</comment>
<comment type="disease" evidence="5">
    <disease id="DI-06592">
        <name>Inflammatory poikiloderma with hair abnormalities and acral keratoses</name>
        <acronym>IPHAK</acronym>
        <description>An autosomal recessive disorder characterized by mottled hyper- and hypopigmentation of the skin, sparse scalp hair and eyelashes, sparse or absent eyebrows, and palmoplantar keratoses.</description>
        <dbReference type="MIM" id="620199"/>
    </disease>
    <text>The disease may be caused by variants affecting the gene represented in this entry.</text>
</comment>
<comment type="similarity">
    <text evidence="6">Belongs to the LTV1 family.</text>
</comment>
<comment type="sequence caution" evidence="6">
    <conflict type="erroneous initiation">
        <sequence resource="EMBL-CDS" id="BAB55388"/>
    </conflict>
    <text>Truncated N-terminus.</text>
</comment>
<keyword id="KW-0002">3D-structure</keyword>
<keyword id="KW-0175">Coiled coil</keyword>
<keyword id="KW-0963">Cytoplasm</keyword>
<keyword id="KW-0225">Disease variant</keyword>
<keyword id="KW-0597">Phosphoprotein</keyword>
<keyword id="KW-1267">Proteomics identification</keyword>
<keyword id="KW-1185">Reference proteome</keyword>
<keyword id="KW-0690">Ribosome biogenesis</keyword>
<proteinExistence type="evidence at protein level"/>
<reference key="1">
    <citation type="journal article" date="2003" name="Nature">
        <title>The DNA sequence and analysis of human chromosome 6.</title>
        <authorList>
            <person name="Mungall A.J."/>
            <person name="Palmer S.A."/>
            <person name="Sims S.K."/>
            <person name="Edwards C.A."/>
            <person name="Ashurst J.L."/>
            <person name="Wilming L."/>
            <person name="Jones M.C."/>
            <person name="Horton R."/>
            <person name="Hunt S.E."/>
            <person name="Scott C.E."/>
            <person name="Gilbert J.G.R."/>
            <person name="Clamp M.E."/>
            <person name="Bethel G."/>
            <person name="Milne S."/>
            <person name="Ainscough R."/>
            <person name="Almeida J.P."/>
            <person name="Ambrose K.D."/>
            <person name="Andrews T.D."/>
            <person name="Ashwell R.I.S."/>
            <person name="Babbage A.K."/>
            <person name="Bagguley C.L."/>
            <person name="Bailey J."/>
            <person name="Banerjee R."/>
            <person name="Barker D.J."/>
            <person name="Barlow K.F."/>
            <person name="Bates K."/>
            <person name="Beare D.M."/>
            <person name="Beasley H."/>
            <person name="Beasley O."/>
            <person name="Bird C.P."/>
            <person name="Blakey S.E."/>
            <person name="Bray-Allen S."/>
            <person name="Brook J."/>
            <person name="Brown A.J."/>
            <person name="Brown J.Y."/>
            <person name="Burford D.C."/>
            <person name="Burrill W."/>
            <person name="Burton J."/>
            <person name="Carder C."/>
            <person name="Carter N.P."/>
            <person name="Chapman J.C."/>
            <person name="Clark S.Y."/>
            <person name="Clark G."/>
            <person name="Clee C.M."/>
            <person name="Clegg S."/>
            <person name="Cobley V."/>
            <person name="Collier R.E."/>
            <person name="Collins J.E."/>
            <person name="Colman L.K."/>
            <person name="Corby N.R."/>
            <person name="Coville G.J."/>
            <person name="Culley K.M."/>
            <person name="Dhami P."/>
            <person name="Davies J."/>
            <person name="Dunn M."/>
            <person name="Earthrowl M.E."/>
            <person name="Ellington A.E."/>
            <person name="Evans K.A."/>
            <person name="Faulkner L."/>
            <person name="Francis M.D."/>
            <person name="Frankish A."/>
            <person name="Frankland J."/>
            <person name="French L."/>
            <person name="Garner P."/>
            <person name="Garnett J."/>
            <person name="Ghori M.J."/>
            <person name="Gilby L.M."/>
            <person name="Gillson C.J."/>
            <person name="Glithero R.J."/>
            <person name="Grafham D.V."/>
            <person name="Grant M."/>
            <person name="Gribble S."/>
            <person name="Griffiths C."/>
            <person name="Griffiths M.N.D."/>
            <person name="Hall R."/>
            <person name="Halls K.S."/>
            <person name="Hammond S."/>
            <person name="Harley J.L."/>
            <person name="Hart E.A."/>
            <person name="Heath P.D."/>
            <person name="Heathcott R."/>
            <person name="Holmes S.J."/>
            <person name="Howden P.J."/>
            <person name="Howe K.L."/>
            <person name="Howell G.R."/>
            <person name="Huckle E."/>
            <person name="Humphray S.J."/>
            <person name="Humphries M.D."/>
            <person name="Hunt A.R."/>
            <person name="Johnson C.M."/>
            <person name="Joy A.A."/>
            <person name="Kay M."/>
            <person name="Keenan S.J."/>
            <person name="Kimberley A.M."/>
            <person name="King A."/>
            <person name="Laird G.K."/>
            <person name="Langford C."/>
            <person name="Lawlor S."/>
            <person name="Leongamornlert D.A."/>
            <person name="Leversha M."/>
            <person name="Lloyd C.R."/>
            <person name="Lloyd D.M."/>
            <person name="Loveland J.E."/>
            <person name="Lovell J."/>
            <person name="Martin S."/>
            <person name="Mashreghi-Mohammadi M."/>
            <person name="Maslen G.L."/>
            <person name="Matthews L."/>
            <person name="McCann O.T."/>
            <person name="McLaren S.J."/>
            <person name="McLay K."/>
            <person name="McMurray A."/>
            <person name="Moore M.J.F."/>
            <person name="Mullikin J.C."/>
            <person name="Niblett D."/>
            <person name="Nickerson T."/>
            <person name="Novik K.L."/>
            <person name="Oliver K."/>
            <person name="Overton-Larty E.K."/>
            <person name="Parker A."/>
            <person name="Patel R."/>
            <person name="Pearce A.V."/>
            <person name="Peck A.I."/>
            <person name="Phillimore B.J.C.T."/>
            <person name="Phillips S."/>
            <person name="Plumb R.W."/>
            <person name="Porter K.M."/>
            <person name="Ramsey Y."/>
            <person name="Ranby S.A."/>
            <person name="Rice C.M."/>
            <person name="Ross M.T."/>
            <person name="Searle S.M."/>
            <person name="Sehra H.K."/>
            <person name="Sheridan E."/>
            <person name="Skuce C.D."/>
            <person name="Smith S."/>
            <person name="Smith M."/>
            <person name="Spraggon L."/>
            <person name="Squares S.L."/>
            <person name="Steward C.A."/>
            <person name="Sycamore N."/>
            <person name="Tamlyn-Hall G."/>
            <person name="Tester J."/>
            <person name="Theaker A.J."/>
            <person name="Thomas D.W."/>
            <person name="Thorpe A."/>
            <person name="Tracey A."/>
            <person name="Tromans A."/>
            <person name="Tubby B."/>
            <person name="Wall M."/>
            <person name="Wallis J.M."/>
            <person name="West A.P."/>
            <person name="White S.S."/>
            <person name="Whitehead S.L."/>
            <person name="Whittaker H."/>
            <person name="Wild A."/>
            <person name="Willey D.J."/>
            <person name="Wilmer T.E."/>
            <person name="Wood J.M."/>
            <person name="Wray P.W."/>
            <person name="Wyatt J.C."/>
            <person name="Young L."/>
            <person name="Younger R.M."/>
            <person name="Bentley D.R."/>
            <person name="Coulson A."/>
            <person name="Durbin R.M."/>
            <person name="Hubbard T."/>
            <person name="Sulston J.E."/>
            <person name="Dunham I."/>
            <person name="Rogers J."/>
            <person name="Beck S."/>
        </authorList>
    </citation>
    <scope>NUCLEOTIDE SEQUENCE [LARGE SCALE GENOMIC DNA]</scope>
</reference>
<reference key="2">
    <citation type="submission" date="2005-09" db="EMBL/GenBank/DDBJ databases">
        <authorList>
            <person name="Mural R.J."/>
            <person name="Istrail S."/>
            <person name="Sutton G.G."/>
            <person name="Florea L."/>
            <person name="Halpern A.L."/>
            <person name="Mobarry C.M."/>
            <person name="Lippert R."/>
            <person name="Walenz B."/>
            <person name="Shatkay H."/>
            <person name="Dew I."/>
            <person name="Miller J.R."/>
            <person name="Flanigan M.J."/>
            <person name="Edwards N.J."/>
            <person name="Bolanos R."/>
            <person name="Fasulo D."/>
            <person name="Halldorsson B.V."/>
            <person name="Hannenhalli S."/>
            <person name="Turner R."/>
            <person name="Yooseph S."/>
            <person name="Lu F."/>
            <person name="Nusskern D.R."/>
            <person name="Shue B.C."/>
            <person name="Zheng X.H."/>
            <person name="Zhong F."/>
            <person name="Delcher A.L."/>
            <person name="Huson D.H."/>
            <person name="Kravitz S.A."/>
            <person name="Mouchard L."/>
            <person name="Reinert K."/>
            <person name="Remington K.A."/>
            <person name="Clark A.G."/>
            <person name="Waterman M.S."/>
            <person name="Eichler E.E."/>
            <person name="Adams M.D."/>
            <person name="Hunkapiller M.W."/>
            <person name="Myers E.W."/>
            <person name="Venter J.C."/>
        </authorList>
    </citation>
    <scope>NUCLEOTIDE SEQUENCE [LARGE SCALE GENOMIC DNA]</scope>
</reference>
<reference key="3">
    <citation type="journal article" date="2004" name="Genome Res.">
        <title>The status, quality, and expansion of the NIH full-length cDNA project: the Mammalian Gene Collection (MGC).</title>
        <authorList>
            <consortium name="The MGC Project Team"/>
        </authorList>
    </citation>
    <scope>NUCLEOTIDE SEQUENCE [LARGE SCALE MRNA]</scope>
    <source>
        <tissue>Skin</tissue>
    </source>
</reference>
<reference key="4">
    <citation type="journal article" date="2004" name="Nat. Genet.">
        <title>Complete sequencing and characterization of 21,243 full-length human cDNAs.</title>
        <authorList>
            <person name="Ota T."/>
            <person name="Suzuki Y."/>
            <person name="Nishikawa T."/>
            <person name="Otsuki T."/>
            <person name="Sugiyama T."/>
            <person name="Irie R."/>
            <person name="Wakamatsu A."/>
            <person name="Hayashi K."/>
            <person name="Sato H."/>
            <person name="Nagai K."/>
            <person name="Kimura K."/>
            <person name="Makita H."/>
            <person name="Sekine M."/>
            <person name="Obayashi M."/>
            <person name="Nishi T."/>
            <person name="Shibahara T."/>
            <person name="Tanaka T."/>
            <person name="Ishii S."/>
            <person name="Yamamoto J."/>
            <person name="Saito K."/>
            <person name="Kawai Y."/>
            <person name="Isono Y."/>
            <person name="Nakamura Y."/>
            <person name="Nagahari K."/>
            <person name="Murakami K."/>
            <person name="Yasuda T."/>
            <person name="Iwayanagi T."/>
            <person name="Wagatsuma M."/>
            <person name="Shiratori A."/>
            <person name="Sudo H."/>
            <person name="Hosoiri T."/>
            <person name="Kaku Y."/>
            <person name="Kodaira H."/>
            <person name="Kondo H."/>
            <person name="Sugawara M."/>
            <person name="Takahashi M."/>
            <person name="Kanda K."/>
            <person name="Yokoi T."/>
            <person name="Furuya T."/>
            <person name="Kikkawa E."/>
            <person name="Omura Y."/>
            <person name="Abe K."/>
            <person name="Kamihara K."/>
            <person name="Katsuta N."/>
            <person name="Sato K."/>
            <person name="Tanikawa M."/>
            <person name="Yamazaki M."/>
            <person name="Ninomiya K."/>
            <person name="Ishibashi T."/>
            <person name="Yamashita H."/>
            <person name="Murakawa K."/>
            <person name="Fujimori K."/>
            <person name="Tanai H."/>
            <person name="Kimata M."/>
            <person name="Watanabe M."/>
            <person name="Hiraoka S."/>
            <person name="Chiba Y."/>
            <person name="Ishida S."/>
            <person name="Ono Y."/>
            <person name="Takiguchi S."/>
            <person name="Watanabe S."/>
            <person name="Yosida M."/>
            <person name="Hotuta T."/>
            <person name="Kusano J."/>
            <person name="Kanehori K."/>
            <person name="Takahashi-Fujii A."/>
            <person name="Hara H."/>
            <person name="Tanase T.-O."/>
            <person name="Nomura Y."/>
            <person name="Togiya S."/>
            <person name="Komai F."/>
            <person name="Hara R."/>
            <person name="Takeuchi K."/>
            <person name="Arita M."/>
            <person name="Imose N."/>
            <person name="Musashino K."/>
            <person name="Yuuki H."/>
            <person name="Oshima A."/>
            <person name="Sasaki N."/>
            <person name="Aotsuka S."/>
            <person name="Yoshikawa Y."/>
            <person name="Matsunawa H."/>
            <person name="Ichihara T."/>
            <person name="Shiohata N."/>
            <person name="Sano S."/>
            <person name="Moriya S."/>
            <person name="Momiyama H."/>
            <person name="Satoh N."/>
            <person name="Takami S."/>
            <person name="Terashima Y."/>
            <person name="Suzuki O."/>
            <person name="Nakagawa S."/>
            <person name="Senoh A."/>
            <person name="Mizoguchi H."/>
            <person name="Goto Y."/>
            <person name="Shimizu F."/>
            <person name="Wakebe H."/>
            <person name="Hishigaki H."/>
            <person name="Watanabe T."/>
            <person name="Sugiyama A."/>
            <person name="Takemoto M."/>
            <person name="Kawakami B."/>
            <person name="Yamazaki M."/>
            <person name="Watanabe K."/>
            <person name="Kumagai A."/>
            <person name="Itakura S."/>
            <person name="Fukuzumi Y."/>
            <person name="Fujimori Y."/>
            <person name="Komiyama M."/>
            <person name="Tashiro H."/>
            <person name="Tanigami A."/>
            <person name="Fujiwara T."/>
            <person name="Ono T."/>
            <person name="Yamada K."/>
            <person name="Fujii Y."/>
            <person name="Ozaki K."/>
            <person name="Hirao M."/>
            <person name="Ohmori Y."/>
            <person name="Kawabata A."/>
            <person name="Hikiji T."/>
            <person name="Kobatake N."/>
            <person name="Inagaki H."/>
            <person name="Ikema Y."/>
            <person name="Okamoto S."/>
            <person name="Okitani R."/>
            <person name="Kawakami T."/>
            <person name="Noguchi S."/>
            <person name="Itoh T."/>
            <person name="Shigeta K."/>
            <person name="Senba T."/>
            <person name="Matsumura K."/>
            <person name="Nakajima Y."/>
            <person name="Mizuno T."/>
            <person name="Morinaga M."/>
            <person name="Sasaki M."/>
            <person name="Togashi T."/>
            <person name="Oyama M."/>
            <person name="Hata H."/>
            <person name="Watanabe M."/>
            <person name="Komatsu T."/>
            <person name="Mizushima-Sugano J."/>
            <person name="Satoh T."/>
            <person name="Shirai Y."/>
            <person name="Takahashi Y."/>
            <person name="Nakagawa K."/>
            <person name="Okumura K."/>
            <person name="Nagase T."/>
            <person name="Nomura N."/>
            <person name="Kikuchi H."/>
            <person name="Masuho Y."/>
            <person name="Yamashita R."/>
            <person name="Nakai K."/>
            <person name="Yada T."/>
            <person name="Nakamura Y."/>
            <person name="Ohara O."/>
            <person name="Isogai T."/>
            <person name="Sugano S."/>
        </authorList>
    </citation>
    <scope>NUCLEOTIDE SEQUENCE [LARGE SCALE MRNA] OF 49-475</scope>
    <source>
        <tissue>Placenta</tissue>
    </source>
</reference>
<reference key="5">
    <citation type="journal article" date="2009" name="Sci. Signal.">
        <title>Quantitative phosphoproteomic analysis of T cell receptor signaling reveals system-wide modulation of protein-protein interactions.</title>
        <authorList>
            <person name="Mayya V."/>
            <person name="Lundgren D.H."/>
            <person name="Hwang S.-I."/>
            <person name="Rezaul K."/>
            <person name="Wu L."/>
            <person name="Eng J.K."/>
            <person name="Rodionov V."/>
            <person name="Han D.K."/>
        </authorList>
    </citation>
    <scope>PHOSPHORYLATION [LARGE SCALE ANALYSIS] AT SER-331</scope>
    <scope>IDENTIFICATION BY MASS SPECTROMETRY [LARGE SCALE ANALYSIS]</scope>
    <source>
        <tissue>Leukemic T-cell</tissue>
    </source>
</reference>
<reference key="6">
    <citation type="journal article" date="2011" name="BMC Syst. Biol.">
        <title>Initial characterization of the human central proteome.</title>
        <authorList>
            <person name="Burkard T.R."/>
            <person name="Planyavsky M."/>
            <person name="Kaupe I."/>
            <person name="Breitwieser F.P."/>
            <person name="Buerckstuemmer T."/>
            <person name="Bennett K.L."/>
            <person name="Superti-Furga G."/>
            <person name="Colinge J."/>
        </authorList>
    </citation>
    <scope>IDENTIFICATION BY MASS SPECTROMETRY [LARGE SCALE ANALYSIS]</scope>
</reference>
<reference key="7">
    <citation type="journal article" date="2013" name="J. Proteome Res.">
        <title>Toward a comprehensive characterization of a human cancer cell phosphoproteome.</title>
        <authorList>
            <person name="Zhou H."/>
            <person name="Di Palma S."/>
            <person name="Preisinger C."/>
            <person name="Peng M."/>
            <person name="Polat A.N."/>
            <person name="Heck A.J."/>
            <person name="Mohammed S."/>
        </authorList>
    </citation>
    <scope>PHOSPHORYLATION [LARGE SCALE ANALYSIS] AT SER-17; SER-24 AND SER-408</scope>
    <scope>IDENTIFICATION BY MASS SPECTROMETRY [LARGE SCALE ANALYSIS]</scope>
    <source>
        <tissue>Cervix carcinoma</tissue>
        <tissue>Erythroleukemia</tissue>
    </source>
</reference>
<reference key="8">
    <citation type="journal article" date="2022" name="Hum. Mol. Genet.">
        <title>Mutations in the ribosome biogenesis factor gene LTV1 are linked to LIPHAK syndrome, a novel poikiloderma-like disorder.</title>
        <authorList>
            <consortium name="Genomics England Research Consortium"/>
            <person name="Han J.H."/>
            <person name="Ryan G."/>
            <person name="Guy A."/>
            <person name="Liu L."/>
            <person name="Quinodoz M."/>
            <person name="Helbling I."/>
            <person name="Lai-Cheong J.E."/>
            <person name="Barwell J."/>
            <person name="Folcher M."/>
            <person name="McGrath J.A."/>
            <person name="Moss C."/>
            <person name="Rivolta C."/>
        </authorList>
    </citation>
    <scope>INVOLVEMENT IN IPHAK</scope>
    <scope>VARIANT IPHAK SER-168</scope>
    <scope>CHARACTERIZATION OF VARIANT IPHAK SER-168</scope>
    <scope>SUBCELLULAR LOCATION</scope>
    <scope>TISSUE SPECIFICITY</scope>
</reference>